<proteinExistence type="inferred from homology"/>
<dbReference type="EC" id="1.4.3.5" evidence="1"/>
<dbReference type="EMBL" id="CP001340">
    <property type="protein sequence ID" value="ACL94431.1"/>
    <property type="molecule type" value="Genomic_DNA"/>
</dbReference>
<dbReference type="RefSeq" id="WP_010918802.1">
    <property type="nucleotide sequence ID" value="NC_011916.1"/>
</dbReference>
<dbReference type="RefSeq" id="YP_002516339.1">
    <property type="nucleotide sequence ID" value="NC_011916.1"/>
</dbReference>
<dbReference type="SMR" id="B8H292"/>
<dbReference type="GeneID" id="7333096"/>
<dbReference type="KEGG" id="ccs:CCNA_00966"/>
<dbReference type="PATRIC" id="fig|565050.3.peg.948"/>
<dbReference type="HOGENOM" id="CLU_032263_2_3_5"/>
<dbReference type="OrthoDB" id="9780392at2"/>
<dbReference type="PhylomeDB" id="B8H292"/>
<dbReference type="UniPathway" id="UPA01068">
    <property type="reaction ID" value="UER00304"/>
</dbReference>
<dbReference type="UniPathway" id="UPA01068">
    <property type="reaction ID" value="UER00305"/>
</dbReference>
<dbReference type="Proteomes" id="UP000001364">
    <property type="component" value="Chromosome"/>
</dbReference>
<dbReference type="GO" id="GO:0010181">
    <property type="term" value="F:FMN binding"/>
    <property type="evidence" value="ECO:0007669"/>
    <property type="project" value="UniProtKB-UniRule"/>
</dbReference>
<dbReference type="GO" id="GO:0004733">
    <property type="term" value="F:pyridoxamine phosphate oxidase activity"/>
    <property type="evidence" value="ECO:0007669"/>
    <property type="project" value="UniProtKB-UniRule"/>
</dbReference>
<dbReference type="GO" id="GO:0008615">
    <property type="term" value="P:pyridoxine biosynthetic process"/>
    <property type="evidence" value="ECO:0007669"/>
    <property type="project" value="UniProtKB-KW"/>
</dbReference>
<dbReference type="Gene3D" id="2.30.110.10">
    <property type="entry name" value="Electron Transport, Fmn-binding Protein, Chain A"/>
    <property type="match status" value="1"/>
</dbReference>
<dbReference type="HAMAP" id="MF_01629">
    <property type="entry name" value="PdxH"/>
    <property type="match status" value="1"/>
</dbReference>
<dbReference type="InterPro" id="IPR000659">
    <property type="entry name" value="Pyridox_Oxase"/>
</dbReference>
<dbReference type="InterPro" id="IPR019740">
    <property type="entry name" value="Pyridox_Oxase_CS"/>
</dbReference>
<dbReference type="InterPro" id="IPR011576">
    <property type="entry name" value="Pyridox_Oxase_N"/>
</dbReference>
<dbReference type="InterPro" id="IPR019576">
    <property type="entry name" value="Pyridoxamine_oxidase_dimer_C"/>
</dbReference>
<dbReference type="InterPro" id="IPR012349">
    <property type="entry name" value="Split_barrel_FMN-bd"/>
</dbReference>
<dbReference type="NCBIfam" id="TIGR00558">
    <property type="entry name" value="pdxH"/>
    <property type="match status" value="1"/>
</dbReference>
<dbReference type="NCBIfam" id="NF004231">
    <property type="entry name" value="PRK05679.1"/>
    <property type="match status" value="1"/>
</dbReference>
<dbReference type="PANTHER" id="PTHR10851:SF0">
    <property type="entry name" value="PYRIDOXINE-5'-PHOSPHATE OXIDASE"/>
    <property type="match status" value="1"/>
</dbReference>
<dbReference type="PANTHER" id="PTHR10851">
    <property type="entry name" value="PYRIDOXINE-5-PHOSPHATE OXIDASE"/>
    <property type="match status" value="1"/>
</dbReference>
<dbReference type="Pfam" id="PF10590">
    <property type="entry name" value="PNP_phzG_C"/>
    <property type="match status" value="1"/>
</dbReference>
<dbReference type="Pfam" id="PF01243">
    <property type="entry name" value="PNPOx_N"/>
    <property type="match status" value="1"/>
</dbReference>
<dbReference type="PIRSF" id="PIRSF000190">
    <property type="entry name" value="Pyd_amn-ph_oxd"/>
    <property type="match status" value="1"/>
</dbReference>
<dbReference type="SUPFAM" id="SSF50475">
    <property type="entry name" value="FMN-binding split barrel"/>
    <property type="match status" value="1"/>
</dbReference>
<dbReference type="PROSITE" id="PS01064">
    <property type="entry name" value="PYRIDOX_OXIDASE"/>
    <property type="match status" value="1"/>
</dbReference>
<organism>
    <name type="scientific">Caulobacter vibrioides (strain NA1000 / CB15N)</name>
    <name type="common">Caulobacter crescentus</name>
    <dbReference type="NCBI Taxonomy" id="565050"/>
    <lineage>
        <taxon>Bacteria</taxon>
        <taxon>Pseudomonadati</taxon>
        <taxon>Pseudomonadota</taxon>
        <taxon>Alphaproteobacteria</taxon>
        <taxon>Caulobacterales</taxon>
        <taxon>Caulobacteraceae</taxon>
        <taxon>Caulobacter</taxon>
    </lineage>
</organism>
<accession>B8H292</accession>
<protein>
    <recommendedName>
        <fullName evidence="1">Pyridoxine/pyridoxamine 5'-phosphate oxidase</fullName>
        <ecNumber evidence="1">1.4.3.5</ecNumber>
    </recommendedName>
    <alternativeName>
        <fullName evidence="1">PNP/PMP oxidase</fullName>
        <shortName evidence="1">PNPOx</shortName>
    </alternativeName>
    <alternativeName>
        <fullName evidence="1">Pyridoxal 5'-phosphate synthase</fullName>
    </alternativeName>
</protein>
<name>PDXH_CAUVN</name>
<keyword id="KW-0285">Flavoprotein</keyword>
<keyword id="KW-0288">FMN</keyword>
<keyword id="KW-0560">Oxidoreductase</keyword>
<keyword id="KW-0664">Pyridoxine biosynthesis</keyword>
<keyword id="KW-1185">Reference proteome</keyword>
<evidence type="ECO:0000255" key="1">
    <source>
        <dbReference type="HAMAP-Rule" id="MF_01629"/>
    </source>
</evidence>
<gene>
    <name evidence="1" type="primary">pdxH</name>
    <name type="ordered locus">CCNA_00966</name>
</gene>
<feature type="chain" id="PRO_1000186298" description="Pyridoxine/pyridoxamine 5'-phosphate oxidase">
    <location>
        <begin position="1"/>
        <end position="222"/>
    </location>
</feature>
<feature type="binding site" evidence="1">
    <location>
        <begin position="71"/>
        <end position="76"/>
    </location>
    <ligand>
        <name>FMN</name>
        <dbReference type="ChEBI" id="CHEBI:58210"/>
    </ligand>
</feature>
<feature type="binding site" evidence="1">
    <location>
        <position position="76"/>
    </location>
    <ligand>
        <name>substrate</name>
    </ligand>
</feature>
<feature type="binding site" evidence="1">
    <location>
        <begin position="86"/>
        <end position="87"/>
    </location>
    <ligand>
        <name>FMN</name>
        <dbReference type="ChEBI" id="CHEBI:58210"/>
    </ligand>
</feature>
<feature type="binding site" evidence="1">
    <location>
        <position position="93"/>
    </location>
    <ligand>
        <name>FMN</name>
        <dbReference type="ChEBI" id="CHEBI:58210"/>
    </ligand>
</feature>
<feature type="binding site" evidence="1">
    <location>
        <position position="115"/>
    </location>
    <ligand>
        <name>FMN</name>
        <dbReference type="ChEBI" id="CHEBI:58210"/>
    </ligand>
</feature>
<feature type="binding site" evidence="1">
    <location>
        <position position="133"/>
    </location>
    <ligand>
        <name>substrate</name>
    </ligand>
</feature>
<feature type="binding site" evidence="1">
    <location>
        <position position="137"/>
    </location>
    <ligand>
        <name>substrate</name>
    </ligand>
</feature>
<feature type="binding site" evidence="1">
    <location>
        <position position="141"/>
    </location>
    <ligand>
        <name>substrate</name>
    </ligand>
</feature>
<feature type="binding site" evidence="1">
    <location>
        <begin position="150"/>
        <end position="151"/>
    </location>
    <ligand>
        <name>FMN</name>
        <dbReference type="ChEBI" id="CHEBI:58210"/>
    </ligand>
</feature>
<feature type="binding site" evidence="1">
    <location>
        <position position="195"/>
    </location>
    <ligand>
        <name>FMN</name>
        <dbReference type="ChEBI" id="CHEBI:58210"/>
    </ligand>
</feature>
<feature type="binding site" evidence="1">
    <location>
        <begin position="201"/>
        <end position="203"/>
    </location>
    <ligand>
        <name>substrate</name>
    </ligand>
</feature>
<feature type="binding site" evidence="1">
    <location>
        <position position="205"/>
    </location>
    <ligand>
        <name>FMN</name>
        <dbReference type="ChEBI" id="CHEBI:58210"/>
    </ligand>
</feature>
<comment type="function">
    <text evidence="1">Catalyzes the oxidation of either pyridoxine 5'-phosphate (PNP) or pyridoxamine 5'-phosphate (PMP) into pyridoxal 5'-phosphate (PLP).</text>
</comment>
<comment type="catalytic activity">
    <reaction evidence="1">
        <text>pyridoxamine 5'-phosphate + O2 + H2O = pyridoxal 5'-phosphate + H2O2 + NH4(+)</text>
        <dbReference type="Rhea" id="RHEA:15817"/>
        <dbReference type="ChEBI" id="CHEBI:15377"/>
        <dbReference type="ChEBI" id="CHEBI:15379"/>
        <dbReference type="ChEBI" id="CHEBI:16240"/>
        <dbReference type="ChEBI" id="CHEBI:28938"/>
        <dbReference type="ChEBI" id="CHEBI:58451"/>
        <dbReference type="ChEBI" id="CHEBI:597326"/>
        <dbReference type="EC" id="1.4.3.5"/>
    </reaction>
</comment>
<comment type="catalytic activity">
    <reaction evidence="1">
        <text>pyridoxine 5'-phosphate + O2 = pyridoxal 5'-phosphate + H2O2</text>
        <dbReference type="Rhea" id="RHEA:15149"/>
        <dbReference type="ChEBI" id="CHEBI:15379"/>
        <dbReference type="ChEBI" id="CHEBI:16240"/>
        <dbReference type="ChEBI" id="CHEBI:58589"/>
        <dbReference type="ChEBI" id="CHEBI:597326"/>
        <dbReference type="EC" id="1.4.3.5"/>
    </reaction>
</comment>
<comment type="cofactor">
    <cofactor evidence="1">
        <name>FMN</name>
        <dbReference type="ChEBI" id="CHEBI:58210"/>
    </cofactor>
    <text evidence="1">Binds 1 FMN per subunit.</text>
</comment>
<comment type="pathway">
    <text evidence="1">Cofactor metabolism; pyridoxal 5'-phosphate salvage; pyridoxal 5'-phosphate from pyridoxamine 5'-phosphate: step 1/1.</text>
</comment>
<comment type="pathway">
    <text evidence="1">Cofactor metabolism; pyridoxal 5'-phosphate salvage; pyridoxal 5'-phosphate from pyridoxine 5'-phosphate: step 1/1.</text>
</comment>
<comment type="subunit">
    <text evidence="1">Homodimer.</text>
</comment>
<comment type="similarity">
    <text evidence="1">Belongs to the pyridoxamine 5'-phosphate oxidase family.</text>
</comment>
<reference key="1">
    <citation type="journal article" date="2010" name="J. Bacteriol.">
        <title>The genetic basis of laboratory adaptation in Caulobacter crescentus.</title>
        <authorList>
            <person name="Marks M.E."/>
            <person name="Castro-Rojas C.M."/>
            <person name="Teiling C."/>
            <person name="Du L."/>
            <person name="Kapatral V."/>
            <person name="Walunas T.L."/>
            <person name="Crosson S."/>
        </authorList>
    </citation>
    <scope>NUCLEOTIDE SEQUENCE [LARGE SCALE GENOMIC DNA]</scope>
    <source>
        <strain>NA1000 / CB15N</strain>
    </source>
</reference>
<sequence>MSADPTLIPASPSEDDYVRQVREATPPPLLSEEDPFALFAEWLEEAGKKEPNDPNAMTVSTVDADGMPDSRMVLLKDFDARGFVFYTNTQSAKGQELNAHPKAALLFHWKSLRRQVRIRGTVEPVTEAEADAYFASRARHSQIGAWASDQSQPLPDRHALEKRVAEMGLKFGLGKVPRPPHWSGYRITPVTIEFWRDRPFRLHERLVFDRADGGWTTKRLFP</sequence>